<proteinExistence type="inferred from homology"/>
<protein>
    <recommendedName>
        <fullName evidence="1">Probable malate:quinone oxidoreductase</fullName>
        <ecNumber evidence="1">1.1.5.4</ecNumber>
    </recommendedName>
    <alternativeName>
        <fullName evidence="1">MQO</fullName>
    </alternativeName>
    <alternativeName>
        <fullName evidence="1">Malate dehydrogenase [quinone]</fullName>
    </alternativeName>
</protein>
<organism>
    <name type="scientific">Bacillus cereus (strain ATCC 14579 / DSM 31 / CCUG 7414 / JCM 2152 / NBRC 15305 / NCIMB 9373 / NCTC 2599 / NRRL B-3711)</name>
    <dbReference type="NCBI Taxonomy" id="226900"/>
    <lineage>
        <taxon>Bacteria</taxon>
        <taxon>Bacillati</taxon>
        <taxon>Bacillota</taxon>
        <taxon>Bacilli</taxon>
        <taxon>Bacillales</taxon>
        <taxon>Bacillaceae</taxon>
        <taxon>Bacillus</taxon>
        <taxon>Bacillus cereus group</taxon>
    </lineage>
</organism>
<evidence type="ECO:0000255" key="1">
    <source>
        <dbReference type="HAMAP-Rule" id="MF_00212"/>
    </source>
</evidence>
<dbReference type="EC" id="1.1.5.4" evidence="1"/>
<dbReference type="EMBL" id="AE016877">
    <property type="protein sequence ID" value="AAP09907.1"/>
    <property type="molecule type" value="Genomic_DNA"/>
</dbReference>
<dbReference type="RefSeq" id="NP_832706.1">
    <property type="nucleotide sequence ID" value="NC_004722.1"/>
</dbReference>
<dbReference type="SMR" id="Q81C25"/>
<dbReference type="STRING" id="226900.BC_2959"/>
<dbReference type="KEGG" id="bce:BC2959"/>
<dbReference type="PATRIC" id="fig|226900.8.peg.3034"/>
<dbReference type="HOGENOM" id="CLU_028151_0_0_9"/>
<dbReference type="UniPathway" id="UPA00223">
    <property type="reaction ID" value="UER01008"/>
</dbReference>
<dbReference type="Proteomes" id="UP000001417">
    <property type="component" value="Chromosome"/>
</dbReference>
<dbReference type="GO" id="GO:0005737">
    <property type="term" value="C:cytoplasm"/>
    <property type="evidence" value="ECO:0000318"/>
    <property type="project" value="GO_Central"/>
</dbReference>
<dbReference type="GO" id="GO:0008924">
    <property type="term" value="F:L-malate dehydrogenase (quinone) activity"/>
    <property type="evidence" value="ECO:0007669"/>
    <property type="project" value="UniProtKB-UniRule"/>
</dbReference>
<dbReference type="GO" id="GO:0006099">
    <property type="term" value="P:tricarboxylic acid cycle"/>
    <property type="evidence" value="ECO:0007669"/>
    <property type="project" value="UniProtKB-UniRule"/>
</dbReference>
<dbReference type="HAMAP" id="MF_00212">
    <property type="entry name" value="MQO"/>
    <property type="match status" value="1"/>
</dbReference>
<dbReference type="InterPro" id="IPR036188">
    <property type="entry name" value="FAD/NAD-bd_sf"/>
</dbReference>
<dbReference type="InterPro" id="IPR006231">
    <property type="entry name" value="MQO"/>
</dbReference>
<dbReference type="NCBIfam" id="TIGR01320">
    <property type="entry name" value="mal_quin_oxido"/>
    <property type="match status" value="1"/>
</dbReference>
<dbReference type="NCBIfam" id="NF003603">
    <property type="entry name" value="PRK05257.1-1"/>
    <property type="match status" value="1"/>
</dbReference>
<dbReference type="NCBIfam" id="NF003604">
    <property type="entry name" value="PRK05257.1-3"/>
    <property type="match status" value="1"/>
</dbReference>
<dbReference type="NCBIfam" id="NF003605">
    <property type="entry name" value="PRK05257.1-4"/>
    <property type="match status" value="1"/>
</dbReference>
<dbReference type="NCBIfam" id="NF003606">
    <property type="entry name" value="PRK05257.2-1"/>
    <property type="match status" value="1"/>
</dbReference>
<dbReference type="NCBIfam" id="NF003608">
    <property type="entry name" value="PRK05257.2-4"/>
    <property type="match status" value="1"/>
</dbReference>
<dbReference type="NCBIfam" id="NF003611">
    <property type="entry name" value="PRK05257.3-2"/>
    <property type="match status" value="1"/>
</dbReference>
<dbReference type="NCBIfam" id="NF009875">
    <property type="entry name" value="PRK13339.1"/>
    <property type="match status" value="1"/>
</dbReference>
<dbReference type="PANTHER" id="PTHR43104">
    <property type="entry name" value="L-2-HYDROXYGLUTARATE DEHYDROGENASE, MITOCHONDRIAL"/>
    <property type="match status" value="1"/>
</dbReference>
<dbReference type="PANTHER" id="PTHR43104:SF2">
    <property type="entry name" value="L-2-HYDROXYGLUTARATE DEHYDROGENASE, MITOCHONDRIAL"/>
    <property type="match status" value="1"/>
</dbReference>
<dbReference type="Pfam" id="PF06039">
    <property type="entry name" value="Mqo"/>
    <property type="match status" value="1"/>
</dbReference>
<dbReference type="SUPFAM" id="SSF51905">
    <property type="entry name" value="FAD/NAD(P)-binding domain"/>
    <property type="match status" value="1"/>
</dbReference>
<reference key="1">
    <citation type="journal article" date="2003" name="Nature">
        <title>Genome sequence of Bacillus cereus and comparative analysis with Bacillus anthracis.</title>
        <authorList>
            <person name="Ivanova N."/>
            <person name="Sorokin A."/>
            <person name="Anderson I."/>
            <person name="Galleron N."/>
            <person name="Candelon B."/>
            <person name="Kapatral V."/>
            <person name="Bhattacharyya A."/>
            <person name="Reznik G."/>
            <person name="Mikhailova N."/>
            <person name="Lapidus A."/>
            <person name="Chu L."/>
            <person name="Mazur M."/>
            <person name="Goltsman E."/>
            <person name="Larsen N."/>
            <person name="D'Souza M."/>
            <person name="Walunas T."/>
            <person name="Grechkin Y."/>
            <person name="Pusch G."/>
            <person name="Haselkorn R."/>
            <person name="Fonstein M."/>
            <person name="Ehrlich S.D."/>
            <person name="Overbeek R."/>
            <person name="Kyrpides N.C."/>
        </authorList>
    </citation>
    <scope>NUCLEOTIDE SEQUENCE [LARGE SCALE GENOMIC DNA]</scope>
    <source>
        <strain>ATCC 14579 / DSM 31 / CCUG 7414 / JCM 2152 / NBRC 15305 / NCIMB 9373 / NCTC 2599 / NRRL B-3711</strain>
    </source>
</reference>
<feature type="chain" id="PRO_0000128705" description="Probable malate:quinone oxidoreductase">
    <location>
        <begin position="1"/>
        <end position="497"/>
    </location>
</feature>
<gene>
    <name evidence="1" type="primary">mqo</name>
    <name type="ordered locus">BC_2959</name>
</gene>
<name>MQO_BACCR</name>
<sequence>MQQKTDVILIGAGIMSATLGSLLKELAPEWEIKVFEKLASAGEESSNEWNNAGTGHSALCELNYTSEKADGSIDISKAVKVNEQFQLSRQFWAYLVKSKLIRNPQDFIMPLPHMSLVQGKKNVEFLKNRFEALSKNPLFQGMEFSDAPETLKKWLPLIMEGRTSNEPMAATKIDSGTDVNFGALTRMLFDYLKTKNVELNYKHSVENIKRTKNGLWEVKVHDMNSGKIEHHTAKFVFIGGGGGSLPLLQKTGIPESKHIGGFPVSGLFMVCKNQKVVEQHHAKVYGKAKVGAPPMSVPHLDTRYIDNKKALLFGPFAGFSPKFLKTGSNLDLIGSVKPNNVLTMLAAGVKEMGLTKYLIQQVMLSHEKRMLDFPAFIPNAKSEDWDIVVAGQRVQVIKDTDAGGKGTLQFGTEVVSAADGSIAALLGASPGASTAVHVMLEVLEKCFPSRMIEWEEKIKEMIPSYGISLTENPRLFQDLHTSTGRTLGLNEKETVHN</sequence>
<accession>Q81C25</accession>
<keyword id="KW-0274">FAD</keyword>
<keyword id="KW-0285">Flavoprotein</keyword>
<keyword id="KW-0560">Oxidoreductase</keyword>
<keyword id="KW-1185">Reference proteome</keyword>
<keyword id="KW-0816">Tricarboxylic acid cycle</keyword>
<comment type="catalytic activity">
    <reaction evidence="1">
        <text>(S)-malate + a quinone = a quinol + oxaloacetate</text>
        <dbReference type="Rhea" id="RHEA:46012"/>
        <dbReference type="ChEBI" id="CHEBI:15589"/>
        <dbReference type="ChEBI" id="CHEBI:16452"/>
        <dbReference type="ChEBI" id="CHEBI:24646"/>
        <dbReference type="ChEBI" id="CHEBI:132124"/>
        <dbReference type="EC" id="1.1.5.4"/>
    </reaction>
</comment>
<comment type="cofactor">
    <cofactor evidence="1">
        <name>FAD</name>
        <dbReference type="ChEBI" id="CHEBI:57692"/>
    </cofactor>
</comment>
<comment type="pathway">
    <text evidence="1">Carbohydrate metabolism; tricarboxylic acid cycle; oxaloacetate from (S)-malate (quinone route): step 1/1.</text>
</comment>
<comment type="similarity">
    <text evidence="1">Belongs to the MQO family.</text>
</comment>